<comment type="function">
    <text evidence="1">Bidirectionally degrades single-stranded DNA into large acid-insoluble oligonucleotides, which are then degraded further into small acid-soluble oligonucleotides.</text>
</comment>
<comment type="catalytic activity">
    <reaction evidence="1">
        <text>Exonucleolytic cleavage in either 5'- to 3'- or 3'- to 5'-direction to yield nucleoside 5'-phosphates.</text>
        <dbReference type="EC" id="3.1.11.6"/>
    </reaction>
</comment>
<comment type="subunit">
    <text evidence="1">Heterooligomer composed of large and small subunits.</text>
</comment>
<comment type="subcellular location">
    <subcellularLocation>
        <location evidence="1">Cytoplasm</location>
    </subcellularLocation>
</comment>
<comment type="similarity">
    <text evidence="1">Belongs to the XseB family.</text>
</comment>
<proteinExistence type="inferred from homology"/>
<reference key="1">
    <citation type="submission" date="2006-10" db="EMBL/GenBank/DDBJ databases">
        <title>Complete sequence of Syntrophobacter fumaroxidans MPOB.</title>
        <authorList>
            <consortium name="US DOE Joint Genome Institute"/>
            <person name="Copeland A."/>
            <person name="Lucas S."/>
            <person name="Lapidus A."/>
            <person name="Barry K."/>
            <person name="Detter J.C."/>
            <person name="Glavina del Rio T."/>
            <person name="Hammon N."/>
            <person name="Israni S."/>
            <person name="Pitluck S."/>
            <person name="Goltsman E.G."/>
            <person name="Martinez M."/>
            <person name="Schmutz J."/>
            <person name="Larimer F."/>
            <person name="Land M."/>
            <person name="Hauser L."/>
            <person name="Kyrpides N."/>
            <person name="Kim E."/>
            <person name="Boone D.R."/>
            <person name="Brockman F."/>
            <person name="Culley D."/>
            <person name="Ferry J."/>
            <person name="Gunsalus R."/>
            <person name="McInerney M.J."/>
            <person name="Morrison M."/>
            <person name="Plugge C."/>
            <person name="Rohlin L."/>
            <person name="Scholten J."/>
            <person name="Sieber J."/>
            <person name="Stams A.J.M."/>
            <person name="Worm P."/>
            <person name="Henstra A.M."/>
            <person name="Richardson P."/>
        </authorList>
    </citation>
    <scope>NUCLEOTIDE SEQUENCE [LARGE SCALE GENOMIC DNA]</scope>
    <source>
        <strain>DSM 10017 / MPOB</strain>
    </source>
</reference>
<keyword id="KW-0963">Cytoplasm</keyword>
<keyword id="KW-0269">Exonuclease</keyword>
<keyword id="KW-0378">Hydrolase</keyword>
<keyword id="KW-0540">Nuclease</keyword>
<keyword id="KW-1185">Reference proteome</keyword>
<name>EX7S_SYNFM</name>
<accession>A0LI55</accession>
<evidence type="ECO:0000255" key="1">
    <source>
        <dbReference type="HAMAP-Rule" id="MF_00337"/>
    </source>
</evidence>
<evidence type="ECO:0000256" key="2">
    <source>
        <dbReference type="SAM" id="MobiDB-lite"/>
    </source>
</evidence>
<sequence length="84" mass="9471">MAKKKSDQFEEALKKLQDIVEKLERGDMPLEEAMEAFSEGIRLARVCHGKLEEAERKVRILLKEQEGDWTTSPFEPASGEPPGG</sequence>
<feature type="chain" id="PRO_1000059725" description="Exodeoxyribonuclease 7 small subunit">
    <location>
        <begin position="1"/>
        <end position="84"/>
    </location>
</feature>
<feature type="region of interest" description="Disordered" evidence="2">
    <location>
        <begin position="65"/>
        <end position="84"/>
    </location>
</feature>
<organism>
    <name type="scientific">Syntrophobacter fumaroxidans (strain DSM 10017 / MPOB)</name>
    <dbReference type="NCBI Taxonomy" id="335543"/>
    <lineage>
        <taxon>Bacteria</taxon>
        <taxon>Pseudomonadati</taxon>
        <taxon>Thermodesulfobacteriota</taxon>
        <taxon>Syntrophobacteria</taxon>
        <taxon>Syntrophobacterales</taxon>
        <taxon>Syntrophobacteraceae</taxon>
        <taxon>Syntrophobacter</taxon>
    </lineage>
</organism>
<protein>
    <recommendedName>
        <fullName evidence="1">Exodeoxyribonuclease 7 small subunit</fullName>
        <ecNumber evidence="1">3.1.11.6</ecNumber>
    </recommendedName>
    <alternativeName>
        <fullName evidence="1">Exodeoxyribonuclease VII small subunit</fullName>
        <shortName evidence="1">Exonuclease VII small subunit</shortName>
    </alternativeName>
</protein>
<dbReference type="EC" id="3.1.11.6" evidence="1"/>
<dbReference type="EMBL" id="CP000478">
    <property type="protein sequence ID" value="ABK17107.1"/>
    <property type="molecule type" value="Genomic_DNA"/>
</dbReference>
<dbReference type="RefSeq" id="WP_011698278.1">
    <property type="nucleotide sequence ID" value="NC_008554.1"/>
</dbReference>
<dbReference type="SMR" id="A0LI55"/>
<dbReference type="FunCoup" id="A0LI55">
    <property type="interactions" value="356"/>
</dbReference>
<dbReference type="STRING" id="335543.Sfum_1416"/>
<dbReference type="KEGG" id="sfu:Sfum_1416"/>
<dbReference type="eggNOG" id="COG1722">
    <property type="taxonomic scope" value="Bacteria"/>
</dbReference>
<dbReference type="HOGENOM" id="CLU_145918_3_1_7"/>
<dbReference type="InParanoid" id="A0LI55"/>
<dbReference type="OrthoDB" id="5523157at2"/>
<dbReference type="Proteomes" id="UP000001784">
    <property type="component" value="Chromosome"/>
</dbReference>
<dbReference type="GO" id="GO:0005829">
    <property type="term" value="C:cytosol"/>
    <property type="evidence" value="ECO:0007669"/>
    <property type="project" value="TreeGrafter"/>
</dbReference>
<dbReference type="GO" id="GO:0009318">
    <property type="term" value="C:exodeoxyribonuclease VII complex"/>
    <property type="evidence" value="ECO:0007669"/>
    <property type="project" value="InterPro"/>
</dbReference>
<dbReference type="GO" id="GO:0008855">
    <property type="term" value="F:exodeoxyribonuclease VII activity"/>
    <property type="evidence" value="ECO:0007669"/>
    <property type="project" value="UniProtKB-UniRule"/>
</dbReference>
<dbReference type="GO" id="GO:0006308">
    <property type="term" value="P:DNA catabolic process"/>
    <property type="evidence" value="ECO:0007669"/>
    <property type="project" value="UniProtKB-UniRule"/>
</dbReference>
<dbReference type="Gene3D" id="1.10.287.1040">
    <property type="entry name" value="Exonuclease VII, small subunit"/>
    <property type="match status" value="1"/>
</dbReference>
<dbReference type="HAMAP" id="MF_00337">
    <property type="entry name" value="Exonuc_7_S"/>
    <property type="match status" value="1"/>
</dbReference>
<dbReference type="InterPro" id="IPR003761">
    <property type="entry name" value="Exonuc_VII_S"/>
</dbReference>
<dbReference type="InterPro" id="IPR037004">
    <property type="entry name" value="Exonuc_VII_ssu_sf"/>
</dbReference>
<dbReference type="NCBIfam" id="NF002140">
    <property type="entry name" value="PRK00977.1-4"/>
    <property type="match status" value="1"/>
</dbReference>
<dbReference type="NCBIfam" id="TIGR01280">
    <property type="entry name" value="xseB"/>
    <property type="match status" value="1"/>
</dbReference>
<dbReference type="PANTHER" id="PTHR34137">
    <property type="entry name" value="EXODEOXYRIBONUCLEASE 7 SMALL SUBUNIT"/>
    <property type="match status" value="1"/>
</dbReference>
<dbReference type="PANTHER" id="PTHR34137:SF1">
    <property type="entry name" value="EXODEOXYRIBONUCLEASE 7 SMALL SUBUNIT"/>
    <property type="match status" value="1"/>
</dbReference>
<dbReference type="Pfam" id="PF02609">
    <property type="entry name" value="Exonuc_VII_S"/>
    <property type="match status" value="1"/>
</dbReference>
<dbReference type="SUPFAM" id="SSF116842">
    <property type="entry name" value="XseB-like"/>
    <property type="match status" value="1"/>
</dbReference>
<gene>
    <name evidence="1" type="primary">xseB</name>
    <name type="ordered locus">Sfum_1416</name>
</gene>